<organism>
    <name type="scientific">Saccharophagus degradans (strain 2-40 / ATCC 43961 / DSM 17024)</name>
    <dbReference type="NCBI Taxonomy" id="203122"/>
    <lineage>
        <taxon>Bacteria</taxon>
        <taxon>Pseudomonadati</taxon>
        <taxon>Pseudomonadota</taxon>
        <taxon>Gammaproteobacteria</taxon>
        <taxon>Cellvibrionales</taxon>
        <taxon>Cellvibrionaceae</taxon>
        <taxon>Saccharophagus</taxon>
    </lineage>
</organism>
<gene>
    <name type="primary">bioC</name>
    <name type="ordered locus">Sde_3137</name>
</gene>
<proteinExistence type="inferred from homology"/>
<name>BIOHC_SACD2</name>
<sequence>MSNIEPSNVKPSNIELGTIPLAEAPATKLEAAYIAKKIAPNNSNPNAPVWVFVHGWGASANTWAPLVDELKSQCEIWLLDLPSFGGNTQAVNSPSAVAADIAKILPANTVLVGWSLGGMLLPLIAQQIEQHWPTKTISHCIGLAANAKFAQGDNYTAAMPAETFQTFCANFNVDPTTTWSRFGLLQAQGDSNRKLVSRQIKALHNAPMPEQFTAWQQALTWLGAIDNRVLLCEITTPFLHLFGEGDALVPADAAVAMAGINPLHQTLVVASAGHVLHFSQPAKIAQIMLARVHAKRNKARVAKSFSNAATEYDSVAYLQQKLANTLCEWVPEQAEKIADLGCGTGYCGLQLQRPERDIYSLDLAQGMLHTARSKALAKQQLFSGVCADIECLPFISNGFDALVSGMSMQWCEDLPAVFSEAHRVLKPNGEMIFSTLGPQTLFELREAWAEADIKLGRQGCVHVNTFIELDRVEIAAKQAGFVIEQTSREIHVLTYDSVMPLMRELKTIGAHNVNPGQEQGLTGKARLKAMAQAYEQFRTAQGVLPLTYEVGFYQLLKV</sequence>
<comment type="function">
    <text evidence="1">Converts the free carboxyl group of a malonyl-thioester to its methyl ester by transfer of a methyl group from S-adenosyl-L-methionine (SAM). It allows to synthesize pimeloyl-ACP via the fatty acid synthetic pathway (By similarity).</text>
</comment>
<comment type="function">
    <text evidence="1">The physiological role of BioH is to remove the methyl group introduced by BioC when the pimeloyl moiety is complete. It allows to synthesize pimeloyl-ACP via the fatty acid synthetic pathway through the hydrolysis of the ester bonds of pimeloyl-ACP esters (By similarity).</text>
</comment>
<comment type="catalytic activity">
    <reaction>
        <text>a carboxylic ester + H2O = an alcohol + a carboxylate + H(+)</text>
        <dbReference type="Rhea" id="RHEA:21164"/>
        <dbReference type="ChEBI" id="CHEBI:15377"/>
        <dbReference type="ChEBI" id="CHEBI:15378"/>
        <dbReference type="ChEBI" id="CHEBI:29067"/>
        <dbReference type="ChEBI" id="CHEBI:30879"/>
        <dbReference type="ChEBI" id="CHEBI:33308"/>
        <dbReference type="EC" id="3.1.1.1"/>
    </reaction>
</comment>
<comment type="catalytic activity">
    <reaction>
        <text>malonyl-[ACP] + S-adenosyl-L-methionine = malonyl-[ACP] methyl ester + S-adenosyl-L-homocysteine</text>
        <dbReference type="Rhea" id="RHEA:17105"/>
        <dbReference type="Rhea" id="RHEA-COMP:9623"/>
        <dbReference type="Rhea" id="RHEA-COMP:9954"/>
        <dbReference type="ChEBI" id="CHEBI:57856"/>
        <dbReference type="ChEBI" id="CHEBI:59789"/>
        <dbReference type="ChEBI" id="CHEBI:78449"/>
        <dbReference type="ChEBI" id="CHEBI:78845"/>
        <dbReference type="EC" id="2.1.1.197"/>
    </reaction>
</comment>
<comment type="pathway">
    <text>Cofactor biosynthesis; biotin biosynthesis.</text>
</comment>
<comment type="similarity">
    <text evidence="2">In the N-terminal section; belongs to the AB hydrolase superfamily. Carboxylesterase BioH family.</text>
</comment>
<comment type="similarity">
    <text evidence="2">In the C-terminal section; belongs to the methyltransferase superfamily.</text>
</comment>
<accession>Q21FY5</accession>
<protein>
    <recommendedName>
        <fullName>Biotin biosynthesis bifunctional protein BioHC</fullName>
    </recommendedName>
    <domain>
        <recommendedName>
            <fullName>Carboxylesterase BioH</fullName>
            <ecNumber>3.1.1.1</ecNumber>
        </recommendedName>
        <alternativeName>
            <fullName>Biotin synthesis protein BioH</fullName>
        </alternativeName>
    </domain>
    <domain>
        <recommendedName>
            <fullName>Malonyl-[acyl-carrier protein] O-methyltransferase</fullName>
            <shortName>Malonyl-ACP O-methyltransferase</shortName>
            <ecNumber>2.1.1.197</ecNumber>
        </recommendedName>
        <alternativeName>
            <fullName>Biotin synthesis protein BioC</fullName>
        </alternativeName>
    </domain>
</protein>
<reference key="1">
    <citation type="journal article" date="2008" name="PLoS Genet.">
        <title>Complete genome sequence of the complex carbohydrate-degrading marine bacterium, Saccharophagus degradans strain 2-40 T.</title>
        <authorList>
            <person name="Weiner R.M."/>
            <person name="Taylor L.E. II"/>
            <person name="Henrissat B."/>
            <person name="Hauser L."/>
            <person name="Land M."/>
            <person name="Coutinho P.M."/>
            <person name="Rancurel C."/>
            <person name="Saunders E.H."/>
            <person name="Longmire A.G."/>
            <person name="Zhang H."/>
            <person name="Bayer E.A."/>
            <person name="Gilbert H.J."/>
            <person name="Larimer F."/>
            <person name="Zhulin I.B."/>
            <person name="Ekborg N.A."/>
            <person name="Lamed R."/>
            <person name="Richardson P.M."/>
            <person name="Borovok I."/>
            <person name="Hutcheson S."/>
        </authorList>
    </citation>
    <scope>NUCLEOTIDE SEQUENCE [LARGE SCALE GENOMIC DNA]</scope>
    <source>
        <strain>2-40 / ATCC 43961 / DSM 17024</strain>
    </source>
</reference>
<evidence type="ECO:0000250" key="1"/>
<evidence type="ECO:0000305" key="2"/>
<feature type="chain" id="PRO_0000412521" description="Biotin biosynthesis bifunctional protein BioHC">
    <location>
        <begin position="1"/>
        <end position="558"/>
    </location>
</feature>
<feature type="region of interest" description="Carboxylesterase">
    <location>
        <begin position="1"/>
        <end position="287"/>
    </location>
</feature>
<feature type="region of interest" description="Malonyl-ACP O-methyltransferase">
    <location>
        <begin position="288"/>
        <end position="558"/>
    </location>
</feature>
<feature type="active site" description="Nucleophile" evidence="1">
    <location>
        <position position="115"/>
    </location>
</feature>
<feature type="active site" evidence="1">
    <location>
        <position position="246"/>
    </location>
</feature>
<feature type="active site" evidence="1">
    <location>
        <position position="274"/>
    </location>
</feature>
<feature type="binding site" evidence="1">
    <location>
        <position position="56"/>
    </location>
    <ligand>
        <name>substrate</name>
    </ligand>
</feature>
<feature type="binding site" evidence="1">
    <location>
        <begin position="115"/>
        <end position="116"/>
    </location>
    <ligand>
        <name>substrate</name>
    </ligand>
</feature>
<feature type="binding site" evidence="1">
    <location>
        <begin position="182"/>
        <end position="186"/>
    </location>
    <ligand>
        <name>substrate</name>
    </ligand>
</feature>
<feature type="binding site" evidence="1">
    <location>
        <position position="274"/>
    </location>
    <ligand>
        <name>substrate</name>
    </ligand>
</feature>
<dbReference type="EC" id="3.1.1.1"/>
<dbReference type="EC" id="2.1.1.197"/>
<dbReference type="EMBL" id="CP000282">
    <property type="protein sequence ID" value="ABD82394.1"/>
    <property type="molecule type" value="Genomic_DNA"/>
</dbReference>
<dbReference type="RefSeq" id="WP_011469610.1">
    <property type="nucleotide sequence ID" value="NC_007912.1"/>
</dbReference>
<dbReference type="SMR" id="Q21FY5"/>
<dbReference type="STRING" id="203122.Sde_3137"/>
<dbReference type="ESTHER" id="sacd2-q21fy5">
    <property type="family name" value="BioH"/>
</dbReference>
<dbReference type="GeneID" id="98615704"/>
<dbReference type="KEGG" id="sde:Sde_3137"/>
<dbReference type="eggNOG" id="COG2226">
    <property type="taxonomic scope" value="Bacteria"/>
</dbReference>
<dbReference type="eggNOG" id="COG2267">
    <property type="taxonomic scope" value="Bacteria"/>
</dbReference>
<dbReference type="HOGENOM" id="CLU_550729_0_0_6"/>
<dbReference type="OrthoDB" id="9760689at2"/>
<dbReference type="UniPathway" id="UPA00078"/>
<dbReference type="Proteomes" id="UP000001947">
    <property type="component" value="Chromosome"/>
</dbReference>
<dbReference type="GO" id="GO:0010340">
    <property type="term" value="F:carboxyl-O-methyltransferase activity"/>
    <property type="evidence" value="ECO:0007669"/>
    <property type="project" value="UniProtKB-UniRule"/>
</dbReference>
<dbReference type="GO" id="GO:0106435">
    <property type="term" value="F:carboxylesterase activity"/>
    <property type="evidence" value="ECO:0007669"/>
    <property type="project" value="UniProtKB-EC"/>
</dbReference>
<dbReference type="GO" id="GO:0102130">
    <property type="term" value="F:malonyl-CoA methyltransferase activity"/>
    <property type="evidence" value="ECO:0007669"/>
    <property type="project" value="UniProtKB-EC"/>
</dbReference>
<dbReference type="GO" id="GO:0008757">
    <property type="term" value="F:S-adenosylmethionine-dependent methyltransferase activity"/>
    <property type="evidence" value="ECO:0007669"/>
    <property type="project" value="InterPro"/>
</dbReference>
<dbReference type="GO" id="GO:0009102">
    <property type="term" value="P:biotin biosynthetic process"/>
    <property type="evidence" value="ECO:0007669"/>
    <property type="project" value="UniProtKB-UniRule"/>
</dbReference>
<dbReference type="GO" id="GO:0032259">
    <property type="term" value="P:methylation"/>
    <property type="evidence" value="ECO:0007669"/>
    <property type="project" value="UniProtKB-KW"/>
</dbReference>
<dbReference type="CDD" id="cd02440">
    <property type="entry name" value="AdoMet_MTases"/>
    <property type="match status" value="1"/>
</dbReference>
<dbReference type="Gene3D" id="3.40.50.1820">
    <property type="entry name" value="alpha/beta hydrolase"/>
    <property type="match status" value="1"/>
</dbReference>
<dbReference type="Gene3D" id="3.40.50.150">
    <property type="entry name" value="Vaccinia Virus protein VP39"/>
    <property type="match status" value="1"/>
</dbReference>
<dbReference type="HAMAP" id="MF_00835">
    <property type="entry name" value="BioC"/>
    <property type="match status" value="1"/>
</dbReference>
<dbReference type="InterPro" id="IPR000073">
    <property type="entry name" value="AB_hydrolase_1"/>
</dbReference>
<dbReference type="InterPro" id="IPR029058">
    <property type="entry name" value="AB_hydrolase_fold"/>
</dbReference>
<dbReference type="InterPro" id="IPR011814">
    <property type="entry name" value="BioC"/>
</dbReference>
<dbReference type="InterPro" id="IPR050602">
    <property type="entry name" value="Malonyl-ACP_OMT"/>
</dbReference>
<dbReference type="InterPro" id="IPR013216">
    <property type="entry name" value="Methyltransf_11"/>
</dbReference>
<dbReference type="InterPro" id="IPR029063">
    <property type="entry name" value="SAM-dependent_MTases_sf"/>
</dbReference>
<dbReference type="NCBIfam" id="TIGR02072">
    <property type="entry name" value="BioC"/>
    <property type="match status" value="1"/>
</dbReference>
<dbReference type="PANTHER" id="PTHR13090">
    <property type="entry name" value="ARGININE-HYDROXYLASE NDUFAF5, MITOCHONDRIAL"/>
    <property type="match status" value="1"/>
</dbReference>
<dbReference type="PANTHER" id="PTHR13090:SF1">
    <property type="entry name" value="ARGININE-HYDROXYLASE NDUFAF5, MITOCHONDRIAL"/>
    <property type="match status" value="1"/>
</dbReference>
<dbReference type="Pfam" id="PF12697">
    <property type="entry name" value="Abhydrolase_6"/>
    <property type="match status" value="1"/>
</dbReference>
<dbReference type="Pfam" id="PF08241">
    <property type="entry name" value="Methyltransf_11"/>
    <property type="match status" value="1"/>
</dbReference>
<dbReference type="SUPFAM" id="SSF53474">
    <property type="entry name" value="alpha/beta-Hydrolases"/>
    <property type="match status" value="1"/>
</dbReference>
<dbReference type="SUPFAM" id="SSF53335">
    <property type="entry name" value="S-adenosyl-L-methionine-dependent methyltransferases"/>
    <property type="match status" value="1"/>
</dbReference>
<keyword id="KW-0093">Biotin biosynthesis</keyword>
<keyword id="KW-0378">Hydrolase</keyword>
<keyword id="KW-0489">Methyltransferase</keyword>
<keyword id="KW-0511">Multifunctional enzyme</keyword>
<keyword id="KW-1185">Reference proteome</keyword>
<keyword id="KW-0949">S-adenosyl-L-methionine</keyword>
<keyword id="KW-0808">Transferase</keyword>